<gene>
    <name evidence="1" type="primary">chdC</name>
    <name type="ordered locus">BALH_4887</name>
</gene>
<proteinExistence type="inferred from homology"/>
<feature type="chain" id="PRO_0000294029" description="Coproheme decarboxylase">
    <location>
        <begin position="1"/>
        <end position="247"/>
    </location>
</feature>
<feature type="active site" evidence="1">
    <location>
        <position position="143"/>
    </location>
</feature>
<feature type="binding site" evidence="1">
    <location>
        <position position="129"/>
    </location>
    <ligand>
        <name>Fe-coproporphyrin III</name>
        <dbReference type="ChEBI" id="CHEBI:68438"/>
    </ligand>
</feature>
<feature type="binding site" evidence="1">
    <location>
        <begin position="143"/>
        <end position="147"/>
    </location>
    <ligand>
        <name>Fe-coproporphyrin III</name>
        <dbReference type="ChEBI" id="CHEBI:68438"/>
    </ligand>
</feature>
<feature type="binding site" description="axial binding residue" evidence="1">
    <location>
        <position position="170"/>
    </location>
    <ligand>
        <name>Fe-coproporphyrin III</name>
        <dbReference type="ChEBI" id="CHEBI:68438"/>
    </ligand>
    <ligandPart>
        <name>Fe</name>
        <dbReference type="ChEBI" id="CHEBI:18248"/>
    </ligandPart>
</feature>
<feature type="binding site" evidence="1">
    <location>
        <position position="183"/>
    </location>
    <ligand>
        <name>Fe-coproporphyrin III</name>
        <dbReference type="ChEBI" id="CHEBI:68438"/>
    </ligand>
</feature>
<feature type="binding site" evidence="1">
    <location>
        <position position="221"/>
    </location>
    <ligand>
        <name>Fe-coproporphyrin III</name>
        <dbReference type="ChEBI" id="CHEBI:68438"/>
    </ligand>
</feature>
<name>CHDC_BACAH</name>
<organism>
    <name type="scientific">Bacillus thuringiensis (strain Al Hakam)</name>
    <dbReference type="NCBI Taxonomy" id="412694"/>
    <lineage>
        <taxon>Bacteria</taxon>
        <taxon>Bacillati</taxon>
        <taxon>Bacillota</taxon>
        <taxon>Bacilli</taxon>
        <taxon>Bacillales</taxon>
        <taxon>Bacillaceae</taxon>
        <taxon>Bacillus</taxon>
        <taxon>Bacillus cereus group</taxon>
    </lineage>
</organism>
<dbReference type="EC" id="1.3.98.5" evidence="1"/>
<dbReference type="EMBL" id="CP000485">
    <property type="protein sequence ID" value="ABK88063.1"/>
    <property type="status" value="ALT_INIT"/>
    <property type="molecule type" value="Genomic_DNA"/>
</dbReference>
<dbReference type="SMR" id="A0RLH0"/>
<dbReference type="KEGG" id="btl:BALH_4887"/>
<dbReference type="HOGENOM" id="CLU_063226_1_0_9"/>
<dbReference type="UniPathway" id="UPA00252"/>
<dbReference type="GO" id="GO:0020037">
    <property type="term" value="F:heme binding"/>
    <property type="evidence" value="ECO:0007669"/>
    <property type="project" value="InterPro"/>
</dbReference>
<dbReference type="GO" id="GO:0046872">
    <property type="term" value="F:metal ion binding"/>
    <property type="evidence" value="ECO:0007669"/>
    <property type="project" value="UniProtKB-KW"/>
</dbReference>
<dbReference type="GO" id="GO:0016634">
    <property type="term" value="F:oxidoreductase activity, acting on the CH-CH group of donors, oxygen as acceptor"/>
    <property type="evidence" value="ECO:0007669"/>
    <property type="project" value="UniProtKB-UniRule"/>
</dbReference>
<dbReference type="GO" id="GO:0004601">
    <property type="term" value="F:peroxidase activity"/>
    <property type="evidence" value="ECO:0007669"/>
    <property type="project" value="InterPro"/>
</dbReference>
<dbReference type="GO" id="GO:0006785">
    <property type="term" value="P:heme B biosynthetic process"/>
    <property type="evidence" value="ECO:0007669"/>
    <property type="project" value="UniProtKB-UniRule"/>
</dbReference>
<dbReference type="Gene3D" id="3.30.70.1030">
    <property type="entry name" value="Apc35880, domain 1"/>
    <property type="match status" value="2"/>
</dbReference>
<dbReference type="HAMAP" id="MF_01442">
    <property type="entry name" value="Coproheme_decarbox_1"/>
    <property type="match status" value="1"/>
</dbReference>
<dbReference type="InterPro" id="IPR031332">
    <property type="entry name" value="CHDC"/>
</dbReference>
<dbReference type="InterPro" id="IPR010644">
    <property type="entry name" value="ChdC/CLD"/>
</dbReference>
<dbReference type="InterPro" id="IPR011008">
    <property type="entry name" value="Dimeric_a/b-barrel"/>
</dbReference>
<dbReference type="NCBIfam" id="NF008913">
    <property type="entry name" value="PRK12276.1"/>
    <property type="match status" value="1"/>
</dbReference>
<dbReference type="PANTHER" id="PTHR36843:SF1">
    <property type="entry name" value="COPROHEME DECARBOXYLASE"/>
    <property type="match status" value="1"/>
</dbReference>
<dbReference type="PANTHER" id="PTHR36843">
    <property type="entry name" value="HEME-DEPENDENT PEROXIDASE YWFI-RELATED"/>
    <property type="match status" value="1"/>
</dbReference>
<dbReference type="Pfam" id="PF06778">
    <property type="entry name" value="Chlor_dismutase"/>
    <property type="match status" value="1"/>
</dbReference>
<dbReference type="SUPFAM" id="SSF54909">
    <property type="entry name" value="Dimeric alpha+beta barrel"/>
    <property type="match status" value="1"/>
</dbReference>
<protein>
    <recommendedName>
        <fullName evidence="1">Coproheme decarboxylase</fullName>
        <ecNumber evidence="1">1.3.98.5</ecNumber>
    </recommendedName>
    <alternativeName>
        <fullName evidence="1">Coproheme III oxidative decarboxylase</fullName>
    </alternativeName>
    <alternativeName>
        <fullName evidence="1">Hydrogen peroxide-dependent heme synthase</fullName>
    </alternativeName>
</protein>
<evidence type="ECO:0000255" key="1">
    <source>
        <dbReference type="HAMAP-Rule" id="MF_01442"/>
    </source>
</evidence>
<evidence type="ECO:0000305" key="2"/>
<sequence length="247" mass="28652">MSEATTTLDGWYCLHDLRSIDWAAWKTLSSDERGQAVSEFLNVVEKWNDVAAAKKGSHAMYTVVGQKADIMLMILRPTMEELNEIETELNKTTLAEYMVPAYSYVSVVELSNYLPADEDPYQNPQILARLYPELPKANHICFYPMDKRRQGDDNWYMLPMEERKKMMYSHSKIGRQYAGKVRQVISGSVGFDDFEWGVTLFADDVLQFKKLIYEMRFDEVSARYGEFGTFFVGNILPDEKVEKFLHI</sequence>
<keyword id="KW-0349">Heme</keyword>
<keyword id="KW-0350">Heme biosynthesis</keyword>
<keyword id="KW-0408">Iron</keyword>
<keyword id="KW-0479">Metal-binding</keyword>
<keyword id="KW-0560">Oxidoreductase</keyword>
<reference key="1">
    <citation type="journal article" date="2007" name="J. Bacteriol.">
        <title>The complete genome sequence of Bacillus thuringiensis Al Hakam.</title>
        <authorList>
            <person name="Challacombe J.F."/>
            <person name="Altherr M.R."/>
            <person name="Xie G."/>
            <person name="Bhotika S.S."/>
            <person name="Brown N."/>
            <person name="Bruce D."/>
            <person name="Campbell C.S."/>
            <person name="Campbell M.L."/>
            <person name="Chen J."/>
            <person name="Chertkov O."/>
            <person name="Cleland C."/>
            <person name="Dimitrijevic M."/>
            <person name="Doggett N.A."/>
            <person name="Fawcett J.J."/>
            <person name="Glavina T."/>
            <person name="Goodwin L.A."/>
            <person name="Green L.D."/>
            <person name="Han C.S."/>
            <person name="Hill K.K."/>
            <person name="Hitchcock P."/>
            <person name="Jackson P.J."/>
            <person name="Keim P."/>
            <person name="Kewalramani A.R."/>
            <person name="Longmire J."/>
            <person name="Lucas S."/>
            <person name="Malfatti S."/>
            <person name="Martinez D."/>
            <person name="McMurry K."/>
            <person name="Meincke L.J."/>
            <person name="Misra M."/>
            <person name="Moseman B.L."/>
            <person name="Mundt M."/>
            <person name="Munk A.C."/>
            <person name="Okinaka R.T."/>
            <person name="Parson-Quintana B."/>
            <person name="Reilly L.P."/>
            <person name="Richardson P."/>
            <person name="Robinson D.L."/>
            <person name="Saunders E."/>
            <person name="Tapia R."/>
            <person name="Tesmer J.G."/>
            <person name="Thayer N."/>
            <person name="Thompson L.S."/>
            <person name="Tice H."/>
            <person name="Ticknor L.O."/>
            <person name="Wills P.L."/>
            <person name="Gilna P."/>
            <person name="Brettin T.S."/>
        </authorList>
    </citation>
    <scope>NUCLEOTIDE SEQUENCE [LARGE SCALE GENOMIC DNA]</scope>
    <source>
        <strain>Al Hakam</strain>
    </source>
</reference>
<accession>A0RLH0</accession>
<comment type="function">
    <text evidence="1">Involved in coproporphyrin-dependent heme b biosynthesis. Catalyzes the decarboxylation of Fe-coproporphyrin III (coproheme) to heme b (protoheme IX), the last step of the pathway. The reaction occurs in a stepwise manner with a three-propionate intermediate.</text>
</comment>
<comment type="catalytic activity">
    <reaction evidence="1">
        <text>Fe-coproporphyrin III + 2 H2O2 + 2 H(+) = heme b + 2 CO2 + 4 H2O</text>
        <dbReference type="Rhea" id="RHEA:56516"/>
        <dbReference type="ChEBI" id="CHEBI:15377"/>
        <dbReference type="ChEBI" id="CHEBI:15378"/>
        <dbReference type="ChEBI" id="CHEBI:16240"/>
        <dbReference type="ChEBI" id="CHEBI:16526"/>
        <dbReference type="ChEBI" id="CHEBI:60344"/>
        <dbReference type="ChEBI" id="CHEBI:68438"/>
        <dbReference type="EC" id="1.3.98.5"/>
    </reaction>
    <physiologicalReaction direction="left-to-right" evidence="1">
        <dbReference type="Rhea" id="RHEA:56517"/>
    </physiologicalReaction>
</comment>
<comment type="catalytic activity">
    <reaction evidence="1">
        <text>Fe-coproporphyrin III + H2O2 + H(+) = harderoheme III + CO2 + 2 H2O</text>
        <dbReference type="Rhea" id="RHEA:57940"/>
        <dbReference type="ChEBI" id="CHEBI:15377"/>
        <dbReference type="ChEBI" id="CHEBI:15378"/>
        <dbReference type="ChEBI" id="CHEBI:16240"/>
        <dbReference type="ChEBI" id="CHEBI:16526"/>
        <dbReference type="ChEBI" id="CHEBI:68438"/>
        <dbReference type="ChEBI" id="CHEBI:142463"/>
    </reaction>
    <physiologicalReaction direction="left-to-right" evidence="1">
        <dbReference type="Rhea" id="RHEA:57941"/>
    </physiologicalReaction>
</comment>
<comment type="catalytic activity">
    <reaction evidence="1">
        <text>harderoheme III + H2O2 + H(+) = heme b + CO2 + 2 H2O</text>
        <dbReference type="Rhea" id="RHEA:57944"/>
        <dbReference type="ChEBI" id="CHEBI:15377"/>
        <dbReference type="ChEBI" id="CHEBI:15378"/>
        <dbReference type="ChEBI" id="CHEBI:16240"/>
        <dbReference type="ChEBI" id="CHEBI:16526"/>
        <dbReference type="ChEBI" id="CHEBI:60344"/>
        <dbReference type="ChEBI" id="CHEBI:142463"/>
    </reaction>
    <physiologicalReaction direction="left-to-right" evidence="1">
        <dbReference type="Rhea" id="RHEA:57945"/>
    </physiologicalReaction>
</comment>
<comment type="cofactor">
    <cofactor evidence="1">
        <name>Fe-coproporphyrin III</name>
        <dbReference type="ChEBI" id="CHEBI:68438"/>
    </cofactor>
    <text evidence="1">Fe-coproporphyrin III acts both as a substrate and a redox cofactor.</text>
</comment>
<comment type="pathway">
    <text evidence="1">Porphyrin-containing compound metabolism; protoheme biosynthesis.</text>
</comment>
<comment type="similarity">
    <text evidence="1">Belongs to the ChdC family. Type 1 subfamily.</text>
</comment>
<comment type="sequence caution" evidence="2">
    <conflict type="erroneous initiation">
        <sequence resource="EMBL-CDS" id="ABK88063"/>
    </conflict>
</comment>